<evidence type="ECO:0000255" key="1">
    <source>
        <dbReference type="HAMAP-Rule" id="MF_00152"/>
    </source>
</evidence>
<name>END4_BACSU</name>
<keyword id="KW-0227">DNA damage</keyword>
<keyword id="KW-0234">DNA repair</keyword>
<keyword id="KW-0255">Endonuclease</keyword>
<keyword id="KW-0378">Hydrolase</keyword>
<keyword id="KW-0479">Metal-binding</keyword>
<keyword id="KW-0540">Nuclease</keyword>
<keyword id="KW-1185">Reference proteome</keyword>
<keyword id="KW-0862">Zinc</keyword>
<dbReference type="EC" id="3.1.21.2" evidence="1"/>
<dbReference type="EMBL" id="D84432">
    <property type="protein sequence ID" value="BAA12496.1"/>
    <property type="molecule type" value="Genomic_DNA"/>
</dbReference>
<dbReference type="EMBL" id="AL009126">
    <property type="protein sequence ID" value="CAB14443.1"/>
    <property type="molecule type" value="Genomic_DNA"/>
</dbReference>
<dbReference type="PIR" id="E69954">
    <property type="entry name" value="E69954"/>
</dbReference>
<dbReference type="RefSeq" id="NP_390392.1">
    <property type="nucleotide sequence ID" value="NC_000964.3"/>
</dbReference>
<dbReference type="RefSeq" id="WP_009967756.1">
    <property type="nucleotide sequence ID" value="NZ_OZ025638.1"/>
</dbReference>
<dbReference type="SMR" id="P54476"/>
<dbReference type="FunCoup" id="P54476">
    <property type="interactions" value="201"/>
</dbReference>
<dbReference type="STRING" id="224308.BSU25130"/>
<dbReference type="jPOST" id="P54476"/>
<dbReference type="PaxDb" id="224308-BSU25130"/>
<dbReference type="EnsemblBacteria" id="CAB14443">
    <property type="protein sequence ID" value="CAB14443"/>
    <property type="gene ID" value="BSU_25130"/>
</dbReference>
<dbReference type="GeneID" id="937922"/>
<dbReference type="KEGG" id="bsu:BSU25130"/>
<dbReference type="PATRIC" id="fig|224308.179.peg.2732"/>
<dbReference type="eggNOG" id="COG0648">
    <property type="taxonomic scope" value="Bacteria"/>
</dbReference>
<dbReference type="InParanoid" id="P54476"/>
<dbReference type="OrthoDB" id="9805666at2"/>
<dbReference type="PhylomeDB" id="P54476"/>
<dbReference type="BioCyc" id="BSUB:BSU25130-MONOMER"/>
<dbReference type="Proteomes" id="UP000001570">
    <property type="component" value="Chromosome"/>
</dbReference>
<dbReference type="GO" id="GO:0008833">
    <property type="term" value="F:deoxyribonuclease IV (phage-T4-induced) activity"/>
    <property type="evidence" value="ECO:0007669"/>
    <property type="project" value="UniProtKB-UniRule"/>
</dbReference>
<dbReference type="GO" id="GO:0003677">
    <property type="term" value="F:DNA binding"/>
    <property type="evidence" value="ECO:0007669"/>
    <property type="project" value="InterPro"/>
</dbReference>
<dbReference type="GO" id="GO:0003906">
    <property type="term" value="F:DNA-(apurinic or apyrimidinic site) endonuclease activity"/>
    <property type="evidence" value="ECO:0000318"/>
    <property type="project" value="GO_Central"/>
</dbReference>
<dbReference type="GO" id="GO:0008081">
    <property type="term" value="F:phosphoric diester hydrolase activity"/>
    <property type="evidence" value="ECO:0000318"/>
    <property type="project" value="GO_Central"/>
</dbReference>
<dbReference type="GO" id="GO:0008270">
    <property type="term" value="F:zinc ion binding"/>
    <property type="evidence" value="ECO:0007669"/>
    <property type="project" value="UniProtKB-UniRule"/>
</dbReference>
<dbReference type="GO" id="GO:0006284">
    <property type="term" value="P:base-excision repair"/>
    <property type="evidence" value="ECO:0000318"/>
    <property type="project" value="GO_Central"/>
</dbReference>
<dbReference type="CDD" id="cd00019">
    <property type="entry name" value="AP2Ec"/>
    <property type="match status" value="1"/>
</dbReference>
<dbReference type="FunFam" id="3.20.20.150:FF:000001">
    <property type="entry name" value="Probable endonuclease 4"/>
    <property type="match status" value="1"/>
</dbReference>
<dbReference type="Gene3D" id="3.20.20.150">
    <property type="entry name" value="Divalent-metal-dependent TIM barrel enzymes"/>
    <property type="match status" value="1"/>
</dbReference>
<dbReference type="HAMAP" id="MF_00152">
    <property type="entry name" value="Nfo"/>
    <property type="match status" value="1"/>
</dbReference>
<dbReference type="InterPro" id="IPR001719">
    <property type="entry name" value="AP_endonuc_2"/>
</dbReference>
<dbReference type="InterPro" id="IPR018246">
    <property type="entry name" value="AP_endonuc_F2_Zn_BS"/>
</dbReference>
<dbReference type="InterPro" id="IPR036237">
    <property type="entry name" value="Xyl_isomerase-like_sf"/>
</dbReference>
<dbReference type="InterPro" id="IPR013022">
    <property type="entry name" value="Xyl_isomerase-like_TIM-brl"/>
</dbReference>
<dbReference type="NCBIfam" id="TIGR00587">
    <property type="entry name" value="nfo"/>
    <property type="match status" value="1"/>
</dbReference>
<dbReference type="NCBIfam" id="NF002196">
    <property type="entry name" value="PRK01060.1-1"/>
    <property type="match status" value="1"/>
</dbReference>
<dbReference type="PANTHER" id="PTHR21445:SF0">
    <property type="entry name" value="APURINIC-APYRIMIDINIC ENDONUCLEASE"/>
    <property type="match status" value="1"/>
</dbReference>
<dbReference type="PANTHER" id="PTHR21445">
    <property type="entry name" value="ENDONUCLEASE IV ENDODEOXYRIBONUCLEASE IV"/>
    <property type="match status" value="1"/>
</dbReference>
<dbReference type="Pfam" id="PF01261">
    <property type="entry name" value="AP_endonuc_2"/>
    <property type="match status" value="1"/>
</dbReference>
<dbReference type="SMART" id="SM00518">
    <property type="entry name" value="AP2Ec"/>
    <property type="match status" value="1"/>
</dbReference>
<dbReference type="SUPFAM" id="SSF51658">
    <property type="entry name" value="Xylose isomerase-like"/>
    <property type="match status" value="1"/>
</dbReference>
<dbReference type="PROSITE" id="PS00729">
    <property type="entry name" value="AP_NUCLEASE_F2_1"/>
    <property type="match status" value="1"/>
</dbReference>
<dbReference type="PROSITE" id="PS00730">
    <property type="entry name" value="AP_NUCLEASE_F2_2"/>
    <property type="match status" value="1"/>
</dbReference>
<dbReference type="PROSITE" id="PS00731">
    <property type="entry name" value="AP_NUCLEASE_F2_3"/>
    <property type="match status" value="1"/>
</dbReference>
<dbReference type="PROSITE" id="PS51432">
    <property type="entry name" value="AP_NUCLEASE_F2_4"/>
    <property type="match status" value="1"/>
</dbReference>
<gene>
    <name evidence="1" type="primary">nfo</name>
    <name type="synonym">yqfS</name>
    <name type="ordered locus">BSU25130</name>
</gene>
<organism>
    <name type="scientific">Bacillus subtilis (strain 168)</name>
    <dbReference type="NCBI Taxonomy" id="224308"/>
    <lineage>
        <taxon>Bacteria</taxon>
        <taxon>Bacillati</taxon>
        <taxon>Bacillota</taxon>
        <taxon>Bacilli</taxon>
        <taxon>Bacillales</taxon>
        <taxon>Bacillaceae</taxon>
        <taxon>Bacillus</taxon>
    </lineage>
</organism>
<reference key="1">
    <citation type="journal article" date="1996" name="Microbiology">
        <title>Systematic sequencing of the 283 kb 210 degrees-232 degrees region of the Bacillus subtilis genome containing the skin element and many sporulation genes.</title>
        <authorList>
            <person name="Mizuno M."/>
            <person name="Masuda S."/>
            <person name="Takemaru K."/>
            <person name="Hosono S."/>
            <person name="Sato T."/>
            <person name="Takeuchi M."/>
            <person name="Kobayashi Y."/>
        </authorList>
    </citation>
    <scope>NUCLEOTIDE SEQUENCE [GENOMIC DNA]</scope>
    <source>
        <strain>168 / JH642</strain>
    </source>
</reference>
<reference key="2">
    <citation type="journal article" date="1997" name="Nature">
        <title>The complete genome sequence of the Gram-positive bacterium Bacillus subtilis.</title>
        <authorList>
            <person name="Kunst F."/>
            <person name="Ogasawara N."/>
            <person name="Moszer I."/>
            <person name="Albertini A.M."/>
            <person name="Alloni G."/>
            <person name="Azevedo V."/>
            <person name="Bertero M.G."/>
            <person name="Bessieres P."/>
            <person name="Bolotin A."/>
            <person name="Borchert S."/>
            <person name="Borriss R."/>
            <person name="Boursier L."/>
            <person name="Brans A."/>
            <person name="Braun M."/>
            <person name="Brignell S.C."/>
            <person name="Bron S."/>
            <person name="Brouillet S."/>
            <person name="Bruschi C.V."/>
            <person name="Caldwell B."/>
            <person name="Capuano V."/>
            <person name="Carter N.M."/>
            <person name="Choi S.-K."/>
            <person name="Codani J.-J."/>
            <person name="Connerton I.F."/>
            <person name="Cummings N.J."/>
            <person name="Daniel R.A."/>
            <person name="Denizot F."/>
            <person name="Devine K.M."/>
            <person name="Duesterhoeft A."/>
            <person name="Ehrlich S.D."/>
            <person name="Emmerson P.T."/>
            <person name="Entian K.-D."/>
            <person name="Errington J."/>
            <person name="Fabret C."/>
            <person name="Ferrari E."/>
            <person name="Foulger D."/>
            <person name="Fritz C."/>
            <person name="Fujita M."/>
            <person name="Fujita Y."/>
            <person name="Fuma S."/>
            <person name="Galizzi A."/>
            <person name="Galleron N."/>
            <person name="Ghim S.-Y."/>
            <person name="Glaser P."/>
            <person name="Goffeau A."/>
            <person name="Golightly E.J."/>
            <person name="Grandi G."/>
            <person name="Guiseppi G."/>
            <person name="Guy B.J."/>
            <person name="Haga K."/>
            <person name="Haiech J."/>
            <person name="Harwood C.R."/>
            <person name="Henaut A."/>
            <person name="Hilbert H."/>
            <person name="Holsappel S."/>
            <person name="Hosono S."/>
            <person name="Hullo M.-F."/>
            <person name="Itaya M."/>
            <person name="Jones L.-M."/>
            <person name="Joris B."/>
            <person name="Karamata D."/>
            <person name="Kasahara Y."/>
            <person name="Klaerr-Blanchard M."/>
            <person name="Klein C."/>
            <person name="Kobayashi Y."/>
            <person name="Koetter P."/>
            <person name="Koningstein G."/>
            <person name="Krogh S."/>
            <person name="Kumano M."/>
            <person name="Kurita K."/>
            <person name="Lapidus A."/>
            <person name="Lardinois S."/>
            <person name="Lauber J."/>
            <person name="Lazarevic V."/>
            <person name="Lee S.-M."/>
            <person name="Levine A."/>
            <person name="Liu H."/>
            <person name="Masuda S."/>
            <person name="Mauel C."/>
            <person name="Medigue C."/>
            <person name="Medina N."/>
            <person name="Mellado R.P."/>
            <person name="Mizuno M."/>
            <person name="Moestl D."/>
            <person name="Nakai S."/>
            <person name="Noback M."/>
            <person name="Noone D."/>
            <person name="O'Reilly M."/>
            <person name="Ogawa K."/>
            <person name="Ogiwara A."/>
            <person name="Oudega B."/>
            <person name="Park S.-H."/>
            <person name="Parro V."/>
            <person name="Pohl T.M."/>
            <person name="Portetelle D."/>
            <person name="Porwollik S."/>
            <person name="Prescott A.M."/>
            <person name="Presecan E."/>
            <person name="Pujic P."/>
            <person name="Purnelle B."/>
            <person name="Rapoport G."/>
            <person name="Rey M."/>
            <person name="Reynolds S."/>
            <person name="Rieger M."/>
            <person name="Rivolta C."/>
            <person name="Rocha E."/>
            <person name="Roche B."/>
            <person name="Rose M."/>
            <person name="Sadaie Y."/>
            <person name="Sato T."/>
            <person name="Scanlan E."/>
            <person name="Schleich S."/>
            <person name="Schroeter R."/>
            <person name="Scoffone F."/>
            <person name="Sekiguchi J."/>
            <person name="Sekowska A."/>
            <person name="Seror S.J."/>
            <person name="Serror P."/>
            <person name="Shin B.-S."/>
            <person name="Soldo B."/>
            <person name="Sorokin A."/>
            <person name="Tacconi E."/>
            <person name="Takagi T."/>
            <person name="Takahashi H."/>
            <person name="Takemaru K."/>
            <person name="Takeuchi M."/>
            <person name="Tamakoshi A."/>
            <person name="Tanaka T."/>
            <person name="Terpstra P."/>
            <person name="Tognoni A."/>
            <person name="Tosato V."/>
            <person name="Uchiyama S."/>
            <person name="Vandenbol M."/>
            <person name="Vannier F."/>
            <person name="Vassarotti A."/>
            <person name="Viari A."/>
            <person name="Wambutt R."/>
            <person name="Wedler E."/>
            <person name="Wedler H."/>
            <person name="Weitzenegger T."/>
            <person name="Winters P."/>
            <person name="Wipat A."/>
            <person name="Yamamoto H."/>
            <person name="Yamane K."/>
            <person name="Yasumoto K."/>
            <person name="Yata K."/>
            <person name="Yoshida K."/>
            <person name="Yoshikawa H.-F."/>
            <person name="Zumstein E."/>
            <person name="Yoshikawa H."/>
            <person name="Danchin A."/>
        </authorList>
    </citation>
    <scope>NUCLEOTIDE SEQUENCE [LARGE SCALE GENOMIC DNA]</scope>
    <source>
        <strain>168</strain>
    </source>
</reference>
<comment type="function">
    <text evidence="1">Endonuclease IV plays a role in DNA repair. It cleaves phosphodiester bonds at apurinic or apyrimidinic (AP) sites, generating a 3'-hydroxyl group and a 5'-terminal sugar phosphate.</text>
</comment>
<comment type="catalytic activity">
    <reaction evidence="1">
        <text>Endonucleolytic cleavage to 5'-phosphooligonucleotide end-products.</text>
        <dbReference type="EC" id="3.1.21.2"/>
    </reaction>
</comment>
<comment type="cofactor">
    <cofactor evidence="1">
        <name>Zn(2+)</name>
        <dbReference type="ChEBI" id="CHEBI:29105"/>
    </cofactor>
    <text evidence="1">Binds 3 Zn(2+) ions.</text>
</comment>
<comment type="similarity">
    <text evidence="1">Belongs to the AP endonuclease 2 family.</text>
</comment>
<proteinExistence type="inferred from homology"/>
<protein>
    <recommendedName>
        <fullName evidence="1">Probable endonuclease 4</fullName>
        <ecNumber evidence="1">3.1.21.2</ecNumber>
    </recommendedName>
    <alternativeName>
        <fullName evidence="1">Endodeoxyribonuclease IV</fullName>
    </alternativeName>
    <alternativeName>
        <fullName evidence="1">Endonuclease IV</fullName>
    </alternativeName>
</protein>
<feature type="chain" id="PRO_0000190825" description="Probable endonuclease 4">
    <location>
        <begin position="1"/>
        <end position="297"/>
    </location>
</feature>
<feature type="binding site" evidence="1">
    <location>
        <position position="69"/>
    </location>
    <ligand>
        <name>Zn(2+)</name>
        <dbReference type="ChEBI" id="CHEBI:29105"/>
        <label>1</label>
    </ligand>
</feature>
<feature type="binding site" evidence="1">
    <location>
        <position position="110"/>
    </location>
    <ligand>
        <name>Zn(2+)</name>
        <dbReference type="ChEBI" id="CHEBI:29105"/>
        <label>1</label>
    </ligand>
</feature>
<feature type="binding site" evidence="1">
    <location>
        <position position="145"/>
    </location>
    <ligand>
        <name>Zn(2+)</name>
        <dbReference type="ChEBI" id="CHEBI:29105"/>
        <label>1</label>
    </ligand>
</feature>
<feature type="binding site" evidence="1">
    <location>
        <position position="145"/>
    </location>
    <ligand>
        <name>Zn(2+)</name>
        <dbReference type="ChEBI" id="CHEBI:29105"/>
        <label>2</label>
    </ligand>
</feature>
<feature type="binding site" evidence="1">
    <location>
        <position position="179"/>
    </location>
    <ligand>
        <name>Zn(2+)</name>
        <dbReference type="ChEBI" id="CHEBI:29105"/>
        <label>2</label>
    </ligand>
</feature>
<feature type="binding site" evidence="1">
    <location>
        <position position="182"/>
    </location>
    <ligand>
        <name>Zn(2+)</name>
        <dbReference type="ChEBI" id="CHEBI:29105"/>
        <label>3</label>
    </ligand>
</feature>
<feature type="binding site" evidence="1">
    <location>
        <position position="214"/>
    </location>
    <ligand>
        <name>Zn(2+)</name>
        <dbReference type="ChEBI" id="CHEBI:29105"/>
        <label>2</label>
    </ligand>
</feature>
<feature type="binding site" evidence="1">
    <location>
        <position position="227"/>
    </location>
    <ligand>
        <name>Zn(2+)</name>
        <dbReference type="ChEBI" id="CHEBI:29105"/>
        <label>3</label>
    </ligand>
</feature>
<feature type="binding site" evidence="1">
    <location>
        <position position="229"/>
    </location>
    <ligand>
        <name>Zn(2+)</name>
        <dbReference type="ChEBI" id="CHEBI:29105"/>
        <label>3</label>
    </ligand>
</feature>
<feature type="binding site" evidence="1">
    <location>
        <position position="259"/>
    </location>
    <ligand>
        <name>Zn(2+)</name>
        <dbReference type="ChEBI" id="CHEBI:29105"/>
        <label>2</label>
    </ligand>
</feature>
<accession>P54476</accession>
<sequence>MLRIGSHVSMSGKHMLLAASQEAVSYGANTFMIYTGAPQNTRRKKIEDLNIEAGRAHMQENGIDEIIVHAPYIINIGNTTNPSTFELGVDFLRSEIERTAAIGAKQIVLHPGAHVGAGAEAGIKKIIEGLNEVIDPNQNVQIALETMAGKGSECGRSFEELAQIIEGVTHNEQLSVCFDTCHTHDAGYNIVEDFDGVLNEFDKIIGIDRIKVLHINDSKNVKGARKDRHENIGFGEIGFDALQYVVHHEQLKDIPKILETPYVGEDKKNKKPPYRFEIEMLKEKQFDDTLLEKILQQ</sequence>